<sequence length="551" mass="64004">MPSARLQQQFIRLWQCCEGKSQDTTLNELAALLSCSRRHMRTLLNTMQDRGWLTWEAEVGRGKRSRLTFLYTGLALQQQRAEDLLEQDRIDQLVQLVGDKATVRQMLVSHLGRSFRQGRHILRVLYYRPLRNLLPGSALRRSETHIARQIFSSLTRINEENGELEADIAHHWQQISPLHWRFFLRPGVHFHHGRELEMDDVIASLKRINTLPLYSHIADIVSPTPWTLDIHLTQPDRWLPLLLGQVPAMILPREWETLSNFASHPIGTGPYAVIRNTTNQLKIQAFDDFFGYRALIDEVNVWVLPEIADEPAGGLMLKGPQGEEKEIESRLEEGCYYLLFDSRTHRGANQQVRDWVSYVLSPTNLVYFAEEQYQQLWFPAYGLLPRWHHARTIKSEKPAGLESLTLTFYQDHSEHRVIAGIMQQILASHQVTLEIKEISYDQWHEGEIESDIWLNSANFTLPLDFSLFAHLCEVPLLQHCIPIDWQADAARWRNGEMNLANWCQQLVASKAMVPLIHHWLIIQGQRSMRGLRMNTLGWFDFKSAWFAPPDP</sequence>
<protein>
    <recommendedName>
        <fullName evidence="1">HTH-type transcriptional regulator SgrR</fullName>
    </recommendedName>
</protein>
<comment type="function">
    <text evidence="1">Activates the small RNA gene sgrS under glucose-phosphate stress conditions as well as yfdZ. Represses its own transcription under both stress and non-stress conditions. Might act as a sensor of the intracellular accumulation of phosphoglucose by binding these molecules in its C-terminal solute-binding domain.</text>
</comment>
<dbReference type="EMBL" id="CP000038">
    <property type="protein sequence ID" value="AAZ86870.1"/>
    <property type="molecule type" value="Genomic_DNA"/>
</dbReference>
<dbReference type="RefSeq" id="WP_001297366.1">
    <property type="nucleotide sequence ID" value="NC_007384.1"/>
</dbReference>
<dbReference type="SMR" id="Q3Z5U2"/>
<dbReference type="GeneID" id="93777368"/>
<dbReference type="KEGG" id="ssn:SSON_0075"/>
<dbReference type="HOGENOM" id="CLU_017028_12_3_6"/>
<dbReference type="Proteomes" id="UP000002529">
    <property type="component" value="Chromosome"/>
</dbReference>
<dbReference type="GO" id="GO:0003677">
    <property type="term" value="F:DNA binding"/>
    <property type="evidence" value="ECO:0007669"/>
    <property type="project" value="UniProtKB-KW"/>
</dbReference>
<dbReference type="GO" id="GO:1904680">
    <property type="term" value="F:peptide transmembrane transporter activity"/>
    <property type="evidence" value="ECO:0007669"/>
    <property type="project" value="TreeGrafter"/>
</dbReference>
<dbReference type="GO" id="GO:0045892">
    <property type="term" value="P:negative regulation of DNA-templated transcription"/>
    <property type="evidence" value="ECO:0007669"/>
    <property type="project" value="UniProtKB-UniRule"/>
</dbReference>
<dbReference type="GO" id="GO:0015833">
    <property type="term" value="P:peptide transport"/>
    <property type="evidence" value="ECO:0007669"/>
    <property type="project" value="TreeGrafter"/>
</dbReference>
<dbReference type="GO" id="GO:0045893">
    <property type="term" value="P:positive regulation of DNA-templated transcription"/>
    <property type="evidence" value="ECO:0007669"/>
    <property type="project" value="UniProtKB-UniRule"/>
</dbReference>
<dbReference type="CDD" id="cd08507">
    <property type="entry name" value="PBP2_SgrR_like"/>
    <property type="match status" value="1"/>
</dbReference>
<dbReference type="FunFam" id="3.40.190.10:FF:000070">
    <property type="entry name" value="HTH-type transcriptional regulator SgrR"/>
    <property type="match status" value="1"/>
</dbReference>
<dbReference type="Gene3D" id="3.40.190.10">
    <property type="entry name" value="Periplasmic binding protein-like II"/>
    <property type="match status" value="1"/>
</dbReference>
<dbReference type="HAMAP" id="MF_01449">
    <property type="entry name" value="HTH_type_SgrR"/>
    <property type="match status" value="1"/>
</dbReference>
<dbReference type="InterPro" id="IPR039424">
    <property type="entry name" value="SBP_5"/>
</dbReference>
<dbReference type="InterPro" id="IPR000914">
    <property type="entry name" value="SBP_5_dom"/>
</dbReference>
<dbReference type="InterPro" id="IPR025370">
    <property type="entry name" value="SgrR_HTH_N"/>
</dbReference>
<dbReference type="InterPro" id="IPR023767">
    <property type="entry name" value="Tscrpt_reg_SgrR"/>
</dbReference>
<dbReference type="NCBIfam" id="NF010149">
    <property type="entry name" value="PRK13626.1"/>
    <property type="match status" value="1"/>
</dbReference>
<dbReference type="PANTHER" id="PTHR30290:SF72">
    <property type="entry name" value="HTH-TYPE TRANSCRIPTIONAL REGULATOR SGRR"/>
    <property type="match status" value="1"/>
</dbReference>
<dbReference type="PANTHER" id="PTHR30290">
    <property type="entry name" value="PERIPLASMIC BINDING COMPONENT OF ABC TRANSPORTER"/>
    <property type="match status" value="1"/>
</dbReference>
<dbReference type="Pfam" id="PF00496">
    <property type="entry name" value="SBP_bac_5"/>
    <property type="match status" value="1"/>
</dbReference>
<dbReference type="Pfam" id="PF12793">
    <property type="entry name" value="SgrR_N"/>
    <property type="match status" value="1"/>
</dbReference>
<dbReference type="SUPFAM" id="SSF53850">
    <property type="entry name" value="Periplasmic binding protein-like II"/>
    <property type="match status" value="1"/>
</dbReference>
<organism>
    <name type="scientific">Shigella sonnei (strain Ss046)</name>
    <dbReference type="NCBI Taxonomy" id="300269"/>
    <lineage>
        <taxon>Bacteria</taxon>
        <taxon>Pseudomonadati</taxon>
        <taxon>Pseudomonadota</taxon>
        <taxon>Gammaproteobacteria</taxon>
        <taxon>Enterobacterales</taxon>
        <taxon>Enterobacteriaceae</taxon>
        <taxon>Shigella</taxon>
    </lineage>
</organism>
<feature type="chain" id="PRO_0000309255" description="HTH-type transcriptional regulator SgrR">
    <location>
        <begin position="1"/>
        <end position="551"/>
    </location>
</feature>
<feature type="domain" description="HTH marR-type" evidence="1">
    <location>
        <begin position="1"/>
        <end position="116"/>
    </location>
</feature>
<feature type="DNA-binding region" description="H-T-H motif" evidence="1">
    <location>
        <begin position="26"/>
        <end position="49"/>
    </location>
</feature>
<feature type="region of interest" description="Solute-binding" evidence="1">
    <location>
        <begin position="163"/>
        <end position="492"/>
    </location>
</feature>
<proteinExistence type="inferred from homology"/>
<reference key="1">
    <citation type="journal article" date="2005" name="Nucleic Acids Res.">
        <title>Genome dynamics and diversity of Shigella species, the etiologic agents of bacillary dysentery.</title>
        <authorList>
            <person name="Yang F."/>
            <person name="Yang J."/>
            <person name="Zhang X."/>
            <person name="Chen L."/>
            <person name="Jiang Y."/>
            <person name="Yan Y."/>
            <person name="Tang X."/>
            <person name="Wang J."/>
            <person name="Xiong Z."/>
            <person name="Dong J."/>
            <person name="Xue Y."/>
            <person name="Zhu Y."/>
            <person name="Xu X."/>
            <person name="Sun L."/>
            <person name="Chen S."/>
            <person name="Nie H."/>
            <person name="Peng J."/>
            <person name="Xu J."/>
            <person name="Wang Y."/>
            <person name="Yuan Z."/>
            <person name="Wen Y."/>
            <person name="Yao Z."/>
            <person name="Shen Y."/>
            <person name="Qiang B."/>
            <person name="Hou Y."/>
            <person name="Yu J."/>
            <person name="Jin Q."/>
        </authorList>
    </citation>
    <scope>NUCLEOTIDE SEQUENCE [LARGE SCALE GENOMIC DNA]</scope>
    <source>
        <strain>Ss046</strain>
    </source>
</reference>
<gene>
    <name evidence="1" type="primary">sgrR</name>
    <name type="ordered locus">SSON_0075</name>
</gene>
<evidence type="ECO:0000255" key="1">
    <source>
        <dbReference type="HAMAP-Rule" id="MF_01449"/>
    </source>
</evidence>
<accession>Q3Z5U2</accession>
<name>SGRR_SHISS</name>
<keyword id="KW-0010">Activator</keyword>
<keyword id="KW-0238">DNA-binding</keyword>
<keyword id="KW-1185">Reference proteome</keyword>
<keyword id="KW-0678">Repressor</keyword>
<keyword id="KW-0804">Transcription</keyword>
<keyword id="KW-0805">Transcription regulation</keyword>